<gene>
    <name evidence="3" type="primary">phnPP</name>
    <name evidence="5" type="ordered locus">Elen_0235</name>
</gene>
<name>PHNPP_EGGLE</name>
<organism>
    <name type="scientific">Eggerthella lenta (strain ATCC 25559 / DSM 2243 / CCUG 17323 / JCM 9979 / KCTC 3265 / NCTC 11813 / VPI 0255 / 1899 B)</name>
    <name type="common">Eubacterium lentum</name>
    <dbReference type="NCBI Taxonomy" id="479437"/>
    <lineage>
        <taxon>Bacteria</taxon>
        <taxon>Bacillati</taxon>
        <taxon>Actinomycetota</taxon>
        <taxon>Coriobacteriia</taxon>
        <taxon>Eggerthellales</taxon>
        <taxon>Eggerthellaceae</taxon>
        <taxon>Eggerthella</taxon>
    </lineage>
</organism>
<reference key="1">
    <citation type="journal article" date="2009" name="Stand. Genomic Sci.">
        <title>Complete genome sequence of Eggerthella lenta type strain (IPP VPI 0255).</title>
        <authorList>
            <person name="Saunders E."/>
            <person name="Pukall R."/>
            <person name="Abt B."/>
            <person name="Lapidus A."/>
            <person name="Glavina Del Rio T."/>
            <person name="Copeland A."/>
            <person name="Tice H."/>
            <person name="Cheng J.F."/>
            <person name="Lucas S."/>
            <person name="Chen F."/>
            <person name="Nolan M."/>
            <person name="Bruce D."/>
            <person name="Goodwin L."/>
            <person name="Pitluck S."/>
            <person name="Ivanova N."/>
            <person name="Mavromatis K."/>
            <person name="Ovchinnikova G."/>
            <person name="Pati A."/>
            <person name="Chen A."/>
            <person name="Palaniappan K."/>
            <person name="Land M."/>
            <person name="Hauser L."/>
            <person name="Chang Y.J."/>
            <person name="Jeffries C.D."/>
            <person name="Chain P."/>
            <person name="Meincke L."/>
            <person name="Sims D."/>
            <person name="Brettin T."/>
            <person name="Detter J.C."/>
            <person name="Goker M."/>
            <person name="Bristow J."/>
            <person name="Eisen J.A."/>
            <person name="Markowitz V."/>
            <person name="Hugenholtz P."/>
            <person name="Kyrpides N.C."/>
            <person name="Klenk H.P."/>
            <person name="Han C."/>
        </authorList>
    </citation>
    <scope>NUCLEOTIDE SEQUENCE [LARGE SCALE GENOMIC DNA]</scope>
    <source>
        <strain>ATCC 25559 / DSM 2243 / CCUG 17323 / JCM 9979 / KCTC 3265 / NCTC 11813 / VPI 0255 / 1899 B</strain>
    </source>
</reference>
<reference key="2">
    <citation type="journal article" date="2013" name="J. Am. Chem. Soc.">
        <title>Discovery of a cyclic phosphodiesterase that catalyzes the sequential hydrolysis of both ester bonds to phosphorus.</title>
        <authorList>
            <person name="Ghodge S.V."/>
            <person name="Cummings J.A."/>
            <person name="Williams H.J."/>
            <person name="Raushel F.M."/>
        </authorList>
    </citation>
    <scope>FUNCTION</scope>
    <scope>CATALYTIC ACTIVITY</scope>
    <scope>BIOPHYSICOCHEMICAL PROPERTIES</scope>
    <source>
        <strain>ATCC 25559 / DSM 2243 / CCUG 17323 / JCM 9979 / KCTC 3265 / NCTC 11813 / VPI 0255 / 1899 B</strain>
    </source>
</reference>
<comment type="function">
    <text evidence="2">Involved in degradation of methylphosphonate. Catalyzes the hydrolysis of the phosphate ester at carbon-1 of 5-phospho-D-ribose 1,2-cyclic phosphate to form ribose 2,5-bisphosphate. This intermediate is then hydrolyzed to ribose-5-phosphate and inorganic phosphate.</text>
</comment>
<comment type="catalytic activity">
    <reaction evidence="2">
        <text>alpha-D-ribose 1,2-cyclic phosphate 5-phosphate + H2O = D-ribose 2,5-bisphosphate + H(+)</text>
        <dbReference type="Rhea" id="RHEA:41612"/>
        <dbReference type="ChEBI" id="CHEBI:15377"/>
        <dbReference type="ChEBI" id="CHEBI:15378"/>
        <dbReference type="ChEBI" id="CHEBI:68687"/>
        <dbReference type="ChEBI" id="CHEBI:78345"/>
        <dbReference type="EC" id="3.1.4.57"/>
    </reaction>
</comment>
<comment type="catalytic activity">
    <reaction evidence="2">
        <text>D-ribose 2,5-bisphosphate + H2O = D-ribose 5-phosphate + phosphate</text>
        <dbReference type="Rhea" id="RHEA:41616"/>
        <dbReference type="ChEBI" id="CHEBI:15377"/>
        <dbReference type="ChEBI" id="CHEBI:43474"/>
        <dbReference type="ChEBI" id="CHEBI:78345"/>
        <dbReference type="ChEBI" id="CHEBI:78346"/>
        <dbReference type="EC" id="3.1.4.57"/>
    </reaction>
</comment>
<comment type="cofactor">
    <cofactor evidence="1">
        <name>Mn(2+)</name>
        <dbReference type="ChEBI" id="CHEBI:29035"/>
    </cofactor>
</comment>
<comment type="biophysicochemical properties">
    <kinetics>
        <KM evidence="2">14 uM for 5-phospho-alpha-D-ribose 1,2-cyclic phosphate</KM>
        <KM evidence="2">23 uM for D-ribofuranose 2,5-bisphosphate</KM>
        <text evidence="2">kcat is 2.0 sec(-1) for 5-phospho-alpha-D-ribose 1,2-cyclic phosphate. kcat is 7.4 sec(-1) for D-ribofuranose 2,5-bisphosphate.</text>
    </kinetics>
</comment>
<comment type="similarity">
    <text evidence="4">Belongs to the PHP family.</text>
</comment>
<keyword id="KW-0378">Hydrolase</keyword>
<keyword id="KW-0464">Manganese</keyword>
<keyword id="KW-0479">Metal-binding</keyword>
<keyword id="KW-1185">Reference proteome</keyword>
<feature type="chain" id="PRO_0000430723" description="Phosphoribosyl 1,2-cyclic phosphate 1,2-diphosphodiesterase">
    <location>
        <begin position="1"/>
        <end position="262"/>
    </location>
</feature>
<feature type="binding site" evidence="1">
    <location>
        <position position="6"/>
    </location>
    <ligand>
        <name>Mn(2+)</name>
        <dbReference type="ChEBI" id="CHEBI:29035"/>
        <label>1</label>
    </ligand>
</feature>
<feature type="binding site" evidence="1">
    <location>
        <position position="8"/>
    </location>
    <ligand>
        <name>Mn(2+)</name>
        <dbReference type="ChEBI" id="CHEBI:29035"/>
        <label>1</label>
    </ligand>
</feature>
<feature type="binding site" evidence="1">
    <location>
        <position position="13"/>
    </location>
    <ligand>
        <name>Mn(2+)</name>
        <dbReference type="ChEBI" id="CHEBI:29035"/>
        <label>2</label>
    </ligand>
</feature>
<feature type="binding site" evidence="1">
    <location>
        <position position="38"/>
    </location>
    <ligand>
        <name>Mn(2+)</name>
        <dbReference type="ChEBI" id="CHEBI:29035"/>
        <label>2</label>
    </ligand>
</feature>
<feature type="binding site" evidence="1">
    <location>
        <position position="63"/>
    </location>
    <ligand>
        <name>Mn(2+)</name>
        <dbReference type="ChEBI" id="CHEBI:29035"/>
        <label>1</label>
    </ligand>
</feature>
<feature type="binding site" evidence="1">
    <location>
        <position position="63"/>
    </location>
    <ligand>
        <name>Mn(2+)</name>
        <dbReference type="ChEBI" id="CHEBI:29035"/>
        <label>3</label>
    </ligand>
</feature>
<feature type="binding site" evidence="1">
    <location>
        <position position="76"/>
    </location>
    <ligand>
        <name>Mn(2+)</name>
        <dbReference type="ChEBI" id="CHEBI:29035"/>
        <label>3</label>
    </ligand>
</feature>
<feature type="binding site" evidence="1">
    <location>
        <position position="193"/>
    </location>
    <ligand>
        <name>Mn(2+)</name>
        <dbReference type="ChEBI" id="CHEBI:29035"/>
        <label>3</label>
    </ligand>
</feature>
<feature type="binding site" evidence="1">
    <location>
        <position position="245"/>
    </location>
    <ligand>
        <name>Mn(2+)</name>
        <dbReference type="ChEBI" id="CHEBI:29035"/>
        <label>1</label>
    </ligand>
</feature>
<feature type="binding site" evidence="1">
    <location>
        <position position="247"/>
    </location>
    <ligand>
        <name>Mn(2+)</name>
        <dbReference type="ChEBI" id="CHEBI:29035"/>
        <label>2</label>
    </ligand>
</feature>
<sequence length="262" mass="28613">MIEDLHVHSTMSDGSDTFEQVLEQAAQRGVERLAFTNHDTTAGLTAARELGERLGVQVVGGIEVSAYDFERGRKVHILGLGVEEGAPALAALCGSTLERRHANSLWQLDRLVEAGYEVDVERALELGRASTCLYKQHLMAALTSEPYPSAAYRTLYRSLFKNGGICDRDIDYVDARDAVRVVVEDGGLAVLAHPGQLDSYDLLPDLVECGLGGIERFHPDHTLADHARCAELAVRYRLVCTGGSDYHGKFGRVPHVGFRVPA</sequence>
<accession>C8WJZ5</accession>
<dbReference type="EC" id="3.1.4.57" evidence="2"/>
<dbReference type="EMBL" id="CP001726">
    <property type="protein sequence ID" value="ACV54227.1"/>
    <property type="molecule type" value="Genomic_DNA"/>
</dbReference>
<dbReference type="RefSeq" id="WP_015759891.1">
    <property type="nucleotide sequence ID" value="NC_013204.1"/>
</dbReference>
<dbReference type="SMR" id="C8WJZ5"/>
<dbReference type="STRING" id="479437.Elen_0235"/>
<dbReference type="PaxDb" id="479437-Elen_0235"/>
<dbReference type="GeneID" id="69509706"/>
<dbReference type="KEGG" id="ele:Elen_0235"/>
<dbReference type="eggNOG" id="COG0613">
    <property type="taxonomic scope" value="Bacteria"/>
</dbReference>
<dbReference type="HOGENOM" id="CLU_067347_1_0_11"/>
<dbReference type="OrthoDB" id="9804333at2"/>
<dbReference type="BioCyc" id="ELEN479437:G1GFY-244-MONOMER"/>
<dbReference type="BioCyc" id="MetaCyc:MONOMER-18308"/>
<dbReference type="BRENDA" id="3.1.4.57">
    <property type="organism ID" value="2185"/>
</dbReference>
<dbReference type="Proteomes" id="UP000001377">
    <property type="component" value="Chromosome"/>
</dbReference>
<dbReference type="GO" id="GO:0035312">
    <property type="term" value="F:5'-3' DNA exonuclease activity"/>
    <property type="evidence" value="ECO:0007669"/>
    <property type="project" value="TreeGrafter"/>
</dbReference>
<dbReference type="GO" id="GO:0004534">
    <property type="term" value="F:5'-3' RNA exonuclease activity"/>
    <property type="evidence" value="ECO:0007669"/>
    <property type="project" value="TreeGrafter"/>
</dbReference>
<dbReference type="GO" id="GO:0046872">
    <property type="term" value="F:metal ion binding"/>
    <property type="evidence" value="ECO:0007669"/>
    <property type="project" value="UniProtKB-KW"/>
</dbReference>
<dbReference type="GO" id="GO:0102561">
    <property type="term" value="F:phosphoribosyl 1,2-cyclic phosphate 1,2-diphosphodiesterase activity"/>
    <property type="evidence" value="ECO:0000314"/>
    <property type="project" value="GO_Central"/>
</dbReference>
<dbReference type="CDD" id="cd07438">
    <property type="entry name" value="PHP_HisPPase_AMP"/>
    <property type="match status" value="1"/>
</dbReference>
<dbReference type="Gene3D" id="1.10.150.650">
    <property type="match status" value="1"/>
</dbReference>
<dbReference type="Gene3D" id="3.20.20.140">
    <property type="entry name" value="Metal-dependent hydrolases"/>
    <property type="match status" value="1"/>
</dbReference>
<dbReference type="InterPro" id="IPR048205">
    <property type="entry name" value="Cycl_ph_dihydrol"/>
</dbReference>
<dbReference type="InterPro" id="IPR004013">
    <property type="entry name" value="PHP_dom"/>
</dbReference>
<dbReference type="InterPro" id="IPR052018">
    <property type="entry name" value="PHP_domain"/>
</dbReference>
<dbReference type="InterPro" id="IPR003141">
    <property type="entry name" value="Pol/His_phosphatase_N"/>
</dbReference>
<dbReference type="InterPro" id="IPR016195">
    <property type="entry name" value="Pol/histidinol_Pase-like"/>
</dbReference>
<dbReference type="NCBIfam" id="NF041661">
    <property type="entry name" value="Cycl_ph_dihydrol"/>
    <property type="match status" value="1"/>
</dbReference>
<dbReference type="PANTHER" id="PTHR42924">
    <property type="entry name" value="EXONUCLEASE"/>
    <property type="match status" value="1"/>
</dbReference>
<dbReference type="PANTHER" id="PTHR42924:SF3">
    <property type="entry name" value="POLYMERASE_HISTIDINOL PHOSPHATASE N-TERMINAL DOMAIN-CONTAINING PROTEIN"/>
    <property type="match status" value="1"/>
</dbReference>
<dbReference type="Pfam" id="PF02811">
    <property type="entry name" value="PHP"/>
    <property type="match status" value="1"/>
</dbReference>
<dbReference type="SMART" id="SM00481">
    <property type="entry name" value="POLIIIAc"/>
    <property type="match status" value="1"/>
</dbReference>
<dbReference type="SUPFAM" id="SSF89550">
    <property type="entry name" value="PHP domain-like"/>
    <property type="match status" value="1"/>
</dbReference>
<evidence type="ECO:0000250" key="1">
    <source>
        <dbReference type="UniProtKB" id="Q7NXD4"/>
    </source>
</evidence>
<evidence type="ECO:0000269" key="2">
    <source>
    </source>
</evidence>
<evidence type="ECO:0000303" key="3">
    <source>
    </source>
</evidence>
<evidence type="ECO:0000305" key="4"/>
<evidence type="ECO:0000312" key="5">
    <source>
        <dbReference type="EMBL" id="ACV54227.1"/>
    </source>
</evidence>
<proteinExistence type="evidence at protein level"/>
<protein>
    <recommendedName>
        <fullName evidence="4">Phosphoribosyl 1,2-cyclic phosphate 1,2-diphosphodiesterase</fullName>
        <ecNumber evidence="2">3.1.4.57</ecNumber>
    </recommendedName>
    <alternativeName>
        <fullName evidence="3">Cyclic phosphate dihydrolase</fullName>
        <shortName evidence="3">cPDH</shortName>
    </alternativeName>
</protein>